<proteinExistence type="inferred from homology"/>
<accession>Q9RL48</accession>
<comment type="function">
    <text evidence="1">Removes 5-oxoproline from various penultimate amino acid residues except L-proline.</text>
</comment>
<comment type="catalytic activity">
    <reaction>
        <text>Release of an N-terminal pyroglutamyl group from a polypeptide, the second amino acid generally not being Pro.</text>
        <dbReference type="EC" id="3.4.19.3"/>
    </reaction>
</comment>
<comment type="subunit">
    <text evidence="1">Homotetramer.</text>
</comment>
<comment type="subcellular location">
    <subcellularLocation>
        <location evidence="1">Cytoplasm</location>
    </subcellularLocation>
</comment>
<comment type="similarity">
    <text evidence="2">Belongs to the peptidase C15 family.</text>
</comment>
<sequence>MTRVLITGFAPFGGERVNPSWQAASLVAAEPPAGLAVTAAELPCVFGESLDALRDAIRADNPDLVLCLGQAGGRPGVTVERVGINVDDARIPDNAGGQPIDEPVVPDGPAAYFSTLPVKACVAAMREAGVPAAVSNTAGTFVCNHVAYGLGHLIATEFPHLRGGFAHVPWAPEQVPDGTAPALPPATVAHGLRALLAAAARTPAEQDLKVTEGATH</sequence>
<dbReference type="EC" id="3.4.19.3"/>
<dbReference type="EMBL" id="AL939105">
    <property type="protein sequence ID" value="CAB56668.1"/>
    <property type="molecule type" value="Genomic_DNA"/>
</dbReference>
<dbReference type="RefSeq" id="NP_624759.1">
    <property type="nucleotide sequence ID" value="NC_003888.3"/>
</dbReference>
<dbReference type="RefSeq" id="WP_011027116.1">
    <property type="nucleotide sequence ID" value="NZ_VNID01000015.1"/>
</dbReference>
<dbReference type="SMR" id="Q9RL48"/>
<dbReference type="FunCoup" id="Q9RL48">
    <property type="interactions" value="14"/>
</dbReference>
<dbReference type="STRING" id="100226.gene:17758021"/>
<dbReference type="MEROPS" id="C15.001"/>
<dbReference type="PaxDb" id="100226-SCO0438"/>
<dbReference type="KEGG" id="sco:SCO0438"/>
<dbReference type="PATRIC" id="fig|100226.15.peg.415"/>
<dbReference type="eggNOG" id="COG2039">
    <property type="taxonomic scope" value="Bacteria"/>
</dbReference>
<dbReference type="HOGENOM" id="CLU_043960_4_0_11"/>
<dbReference type="InParanoid" id="Q9RL48"/>
<dbReference type="OrthoDB" id="9779738at2"/>
<dbReference type="PhylomeDB" id="Q9RL48"/>
<dbReference type="Proteomes" id="UP000001973">
    <property type="component" value="Chromosome"/>
</dbReference>
<dbReference type="GO" id="GO:0005829">
    <property type="term" value="C:cytosol"/>
    <property type="evidence" value="ECO:0007669"/>
    <property type="project" value="InterPro"/>
</dbReference>
<dbReference type="GO" id="GO:0016920">
    <property type="term" value="F:pyroglutamyl-peptidase activity"/>
    <property type="evidence" value="ECO:0007669"/>
    <property type="project" value="UniProtKB-UniRule"/>
</dbReference>
<dbReference type="GO" id="GO:0006508">
    <property type="term" value="P:proteolysis"/>
    <property type="evidence" value="ECO:0007669"/>
    <property type="project" value="UniProtKB-KW"/>
</dbReference>
<dbReference type="CDD" id="cd00501">
    <property type="entry name" value="Peptidase_C15"/>
    <property type="match status" value="1"/>
</dbReference>
<dbReference type="FunFam" id="3.40.630.20:FF:000001">
    <property type="entry name" value="Pyrrolidone-carboxylate peptidase"/>
    <property type="match status" value="1"/>
</dbReference>
<dbReference type="Gene3D" id="3.40.630.20">
    <property type="entry name" value="Peptidase C15, pyroglutamyl peptidase I-like"/>
    <property type="match status" value="1"/>
</dbReference>
<dbReference type="HAMAP" id="MF_00417">
    <property type="entry name" value="Pyrrolid_peptidase"/>
    <property type="match status" value="1"/>
</dbReference>
<dbReference type="InterPro" id="IPR000816">
    <property type="entry name" value="Peptidase_C15"/>
</dbReference>
<dbReference type="InterPro" id="IPR016125">
    <property type="entry name" value="Peptidase_C15-like"/>
</dbReference>
<dbReference type="InterPro" id="IPR036440">
    <property type="entry name" value="Peptidase_C15-like_sf"/>
</dbReference>
<dbReference type="InterPro" id="IPR029762">
    <property type="entry name" value="PGP-I_bact-type"/>
</dbReference>
<dbReference type="InterPro" id="IPR033694">
    <property type="entry name" value="PGPEP1_Cys_AS"/>
</dbReference>
<dbReference type="InterPro" id="IPR033693">
    <property type="entry name" value="PGPEP1_Glu_AS"/>
</dbReference>
<dbReference type="NCBIfam" id="NF009676">
    <property type="entry name" value="PRK13197.1"/>
    <property type="match status" value="1"/>
</dbReference>
<dbReference type="NCBIfam" id="TIGR00504">
    <property type="entry name" value="pyro_pdase"/>
    <property type="match status" value="1"/>
</dbReference>
<dbReference type="PANTHER" id="PTHR23402">
    <property type="entry name" value="PROTEASE FAMILY C15 PYROGLUTAMYL-PEPTIDASE I-RELATED"/>
    <property type="match status" value="1"/>
</dbReference>
<dbReference type="PANTHER" id="PTHR23402:SF1">
    <property type="entry name" value="PYROGLUTAMYL-PEPTIDASE I"/>
    <property type="match status" value="1"/>
</dbReference>
<dbReference type="Pfam" id="PF01470">
    <property type="entry name" value="Peptidase_C15"/>
    <property type="match status" value="1"/>
</dbReference>
<dbReference type="PIRSF" id="PIRSF015592">
    <property type="entry name" value="Prld-crbxl_pptds"/>
    <property type="match status" value="1"/>
</dbReference>
<dbReference type="PRINTS" id="PR00706">
    <property type="entry name" value="PYROGLUPTASE"/>
</dbReference>
<dbReference type="SUPFAM" id="SSF53182">
    <property type="entry name" value="Pyrrolidone carboxyl peptidase (pyroglutamate aminopeptidase)"/>
    <property type="match status" value="1"/>
</dbReference>
<dbReference type="PROSITE" id="PS01334">
    <property type="entry name" value="PYRASE_CYS"/>
    <property type="match status" value="1"/>
</dbReference>
<dbReference type="PROSITE" id="PS01333">
    <property type="entry name" value="PYRASE_GLU"/>
    <property type="match status" value="1"/>
</dbReference>
<organism>
    <name type="scientific">Streptomyces coelicolor (strain ATCC BAA-471 / A3(2) / M145)</name>
    <dbReference type="NCBI Taxonomy" id="100226"/>
    <lineage>
        <taxon>Bacteria</taxon>
        <taxon>Bacillati</taxon>
        <taxon>Actinomycetota</taxon>
        <taxon>Actinomycetes</taxon>
        <taxon>Kitasatosporales</taxon>
        <taxon>Streptomycetaceae</taxon>
        <taxon>Streptomyces</taxon>
        <taxon>Streptomyces albidoflavus group</taxon>
    </lineage>
</organism>
<keyword id="KW-0963">Cytoplasm</keyword>
<keyword id="KW-0378">Hydrolase</keyword>
<keyword id="KW-0645">Protease</keyword>
<keyword id="KW-1185">Reference proteome</keyword>
<keyword id="KW-0788">Thiol protease</keyword>
<evidence type="ECO:0000250" key="1"/>
<evidence type="ECO:0000305" key="2"/>
<name>PCP_STRCO</name>
<feature type="chain" id="PRO_0000184738" description="Pyrrolidone-carboxylate peptidase">
    <location>
        <begin position="1"/>
        <end position="216"/>
    </location>
</feature>
<feature type="active site" evidence="1">
    <location>
        <position position="80"/>
    </location>
</feature>
<feature type="active site" evidence="1">
    <location>
        <position position="143"/>
    </location>
</feature>
<feature type="active site" evidence="1">
    <location>
        <position position="167"/>
    </location>
</feature>
<reference key="1">
    <citation type="journal article" date="2002" name="Nature">
        <title>Complete genome sequence of the model actinomycete Streptomyces coelicolor A3(2).</title>
        <authorList>
            <person name="Bentley S.D."/>
            <person name="Chater K.F."/>
            <person name="Cerdeno-Tarraga A.-M."/>
            <person name="Challis G.L."/>
            <person name="Thomson N.R."/>
            <person name="James K.D."/>
            <person name="Harris D.E."/>
            <person name="Quail M.A."/>
            <person name="Kieser H."/>
            <person name="Harper D."/>
            <person name="Bateman A."/>
            <person name="Brown S."/>
            <person name="Chandra G."/>
            <person name="Chen C.W."/>
            <person name="Collins M."/>
            <person name="Cronin A."/>
            <person name="Fraser A."/>
            <person name="Goble A."/>
            <person name="Hidalgo J."/>
            <person name="Hornsby T."/>
            <person name="Howarth S."/>
            <person name="Huang C.-H."/>
            <person name="Kieser T."/>
            <person name="Larke L."/>
            <person name="Murphy L.D."/>
            <person name="Oliver K."/>
            <person name="O'Neil S."/>
            <person name="Rabbinowitsch E."/>
            <person name="Rajandream M.A."/>
            <person name="Rutherford K.M."/>
            <person name="Rutter S."/>
            <person name="Seeger K."/>
            <person name="Saunders D."/>
            <person name="Sharp S."/>
            <person name="Squares R."/>
            <person name="Squares S."/>
            <person name="Taylor K."/>
            <person name="Warren T."/>
            <person name="Wietzorrek A."/>
            <person name="Woodward J.R."/>
            <person name="Barrell B.G."/>
            <person name="Parkhill J."/>
            <person name="Hopwood D.A."/>
        </authorList>
    </citation>
    <scope>NUCLEOTIDE SEQUENCE [LARGE SCALE GENOMIC DNA]</scope>
    <source>
        <strain>ATCC BAA-471 / A3(2) / M145</strain>
    </source>
</reference>
<gene>
    <name type="primary">pcp</name>
    <name type="ordered locus">SCO0438</name>
    <name type="ORF">SCF51A.16c</name>
</gene>
<protein>
    <recommendedName>
        <fullName>Pyrrolidone-carboxylate peptidase</fullName>
        <ecNumber>3.4.19.3</ecNumber>
    </recommendedName>
    <alternativeName>
        <fullName>5-oxoprolyl-peptidase</fullName>
    </alternativeName>
    <alternativeName>
        <fullName>Pyroglutamyl-peptidase I</fullName>
        <shortName>PGP-I</shortName>
        <shortName>Pyrase</shortName>
    </alternativeName>
</protein>